<protein>
    <recommendedName>
        <fullName evidence="1">Peptide methionine sulfoxide reductase MsrA</fullName>
        <shortName evidence="1">Protein-methionine-S-oxide reductase</shortName>
        <ecNumber evidence="1">1.8.4.11</ecNumber>
    </recommendedName>
    <alternativeName>
        <fullName evidence="1">Peptide-methionine (S)-S-oxide reductase</fullName>
        <shortName evidence="1">Peptide Met(O) reductase</shortName>
    </alternativeName>
</protein>
<comment type="function">
    <text evidence="1">Has an important function as a repair enzyme for proteins that have been inactivated by oxidation. Catalyzes the reversible oxidation-reduction of methionine sulfoxide in proteins to methionine.</text>
</comment>
<comment type="catalytic activity">
    <reaction evidence="1">
        <text>L-methionyl-[protein] + [thioredoxin]-disulfide + H2O = L-methionyl-(S)-S-oxide-[protein] + [thioredoxin]-dithiol</text>
        <dbReference type="Rhea" id="RHEA:14217"/>
        <dbReference type="Rhea" id="RHEA-COMP:10698"/>
        <dbReference type="Rhea" id="RHEA-COMP:10700"/>
        <dbReference type="Rhea" id="RHEA-COMP:12313"/>
        <dbReference type="Rhea" id="RHEA-COMP:12315"/>
        <dbReference type="ChEBI" id="CHEBI:15377"/>
        <dbReference type="ChEBI" id="CHEBI:16044"/>
        <dbReference type="ChEBI" id="CHEBI:29950"/>
        <dbReference type="ChEBI" id="CHEBI:44120"/>
        <dbReference type="ChEBI" id="CHEBI:50058"/>
        <dbReference type="EC" id="1.8.4.11"/>
    </reaction>
</comment>
<comment type="catalytic activity">
    <reaction evidence="1">
        <text>[thioredoxin]-disulfide + L-methionine + H2O = L-methionine (S)-S-oxide + [thioredoxin]-dithiol</text>
        <dbReference type="Rhea" id="RHEA:19993"/>
        <dbReference type="Rhea" id="RHEA-COMP:10698"/>
        <dbReference type="Rhea" id="RHEA-COMP:10700"/>
        <dbReference type="ChEBI" id="CHEBI:15377"/>
        <dbReference type="ChEBI" id="CHEBI:29950"/>
        <dbReference type="ChEBI" id="CHEBI:50058"/>
        <dbReference type="ChEBI" id="CHEBI:57844"/>
        <dbReference type="ChEBI" id="CHEBI:58772"/>
        <dbReference type="EC" id="1.8.4.11"/>
    </reaction>
</comment>
<comment type="similarity">
    <text evidence="1">Belongs to the MsrA Met sulfoxide reductase family.</text>
</comment>
<gene>
    <name evidence="1" type="primary">msrA</name>
    <name type="ordered locus">Sare_0861</name>
</gene>
<feature type="chain" id="PRO_1000145429" description="Peptide methionine sulfoxide reductase MsrA">
    <location>
        <begin position="1"/>
        <end position="220"/>
    </location>
</feature>
<feature type="active site" evidence="1">
    <location>
        <position position="54"/>
    </location>
</feature>
<dbReference type="EC" id="1.8.4.11" evidence="1"/>
<dbReference type="EMBL" id="CP000850">
    <property type="protein sequence ID" value="ABV96779.1"/>
    <property type="molecule type" value="Genomic_DNA"/>
</dbReference>
<dbReference type="SMR" id="A8M3K6"/>
<dbReference type="STRING" id="391037.Sare_0861"/>
<dbReference type="KEGG" id="saq:Sare_0861"/>
<dbReference type="PATRIC" id="fig|391037.6.peg.878"/>
<dbReference type="eggNOG" id="COG0225">
    <property type="taxonomic scope" value="Bacteria"/>
</dbReference>
<dbReference type="HOGENOM" id="CLU_031040_10_3_11"/>
<dbReference type="OrthoDB" id="4174719at2"/>
<dbReference type="GO" id="GO:0005737">
    <property type="term" value="C:cytoplasm"/>
    <property type="evidence" value="ECO:0007669"/>
    <property type="project" value="TreeGrafter"/>
</dbReference>
<dbReference type="GO" id="GO:0036456">
    <property type="term" value="F:L-methionine-(S)-S-oxide reductase activity"/>
    <property type="evidence" value="ECO:0007669"/>
    <property type="project" value="TreeGrafter"/>
</dbReference>
<dbReference type="GO" id="GO:0008113">
    <property type="term" value="F:peptide-methionine (S)-S-oxide reductase activity"/>
    <property type="evidence" value="ECO:0007669"/>
    <property type="project" value="UniProtKB-UniRule"/>
</dbReference>
<dbReference type="GO" id="GO:0034599">
    <property type="term" value="P:cellular response to oxidative stress"/>
    <property type="evidence" value="ECO:0007669"/>
    <property type="project" value="TreeGrafter"/>
</dbReference>
<dbReference type="GO" id="GO:0036211">
    <property type="term" value="P:protein modification process"/>
    <property type="evidence" value="ECO:0007669"/>
    <property type="project" value="UniProtKB-UniRule"/>
</dbReference>
<dbReference type="FunFam" id="3.30.1060.10:FF:000001">
    <property type="entry name" value="Peptide methionine sulfoxide reductase MsrA"/>
    <property type="match status" value="1"/>
</dbReference>
<dbReference type="Gene3D" id="3.30.1060.10">
    <property type="entry name" value="Peptide methionine sulphoxide reductase MsrA"/>
    <property type="match status" value="1"/>
</dbReference>
<dbReference type="HAMAP" id="MF_01401">
    <property type="entry name" value="MsrA"/>
    <property type="match status" value="1"/>
</dbReference>
<dbReference type="InterPro" id="IPR002569">
    <property type="entry name" value="Met_Sox_Rdtase_MsrA_dom"/>
</dbReference>
<dbReference type="InterPro" id="IPR036509">
    <property type="entry name" value="Met_Sox_Rdtase_MsrA_sf"/>
</dbReference>
<dbReference type="InterPro" id="IPR050162">
    <property type="entry name" value="MsrA_MetSO_reductase"/>
</dbReference>
<dbReference type="NCBIfam" id="TIGR00401">
    <property type="entry name" value="msrA"/>
    <property type="match status" value="1"/>
</dbReference>
<dbReference type="PANTHER" id="PTHR42799">
    <property type="entry name" value="MITOCHONDRIAL PEPTIDE METHIONINE SULFOXIDE REDUCTASE"/>
    <property type="match status" value="1"/>
</dbReference>
<dbReference type="PANTHER" id="PTHR42799:SF2">
    <property type="entry name" value="MITOCHONDRIAL PEPTIDE METHIONINE SULFOXIDE REDUCTASE"/>
    <property type="match status" value="1"/>
</dbReference>
<dbReference type="Pfam" id="PF01625">
    <property type="entry name" value="PMSR"/>
    <property type="match status" value="1"/>
</dbReference>
<dbReference type="SUPFAM" id="SSF55068">
    <property type="entry name" value="Peptide methionine sulfoxide reductase"/>
    <property type="match status" value="1"/>
</dbReference>
<reference key="1">
    <citation type="submission" date="2007-10" db="EMBL/GenBank/DDBJ databases">
        <title>Complete sequence of Salinispora arenicola CNS-205.</title>
        <authorList>
            <consortium name="US DOE Joint Genome Institute"/>
            <person name="Copeland A."/>
            <person name="Lucas S."/>
            <person name="Lapidus A."/>
            <person name="Barry K."/>
            <person name="Glavina del Rio T."/>
            <person name="Dalin E."/>
            <person name="Tice H."/>
            <person name="Pitluck S."/>
            <person name="Foster B."/>
            <person name="Schmutz J."/>
            <person name="Larimer F."/>
            <person name="Land M."/>
            <person name="Hauser L."/>
            <person name="Kyrpides N."/>
            <person name="Ivanova N."/>
            <person name="Jensen P.R."/>
            <person name="Moore B.S."/>
            <person name="Penn K."/>
            <person name="Jenkins C."/>
            <person name="Udwary D."/>
            <person name="Xiang L."/>
            <person name="Gontang E."/>
            <person name="Richardson P."/>
        </authorList>
    </citation>
    <scope>NUCLEOTIDE SEQUENCE [LARGE SCALE GENOMIC DNA]</scope>
    <source>
        <strain>CNS-205</strain>
    </source>
</reference>
<name>MSRA_SALAI</name>
<organism>
    <name type="scientific">Salinispora arenicola (strain CNS-205)</name>
    <dbReference type="NCBI Taxonomy" id="391037"/>
    <lineage>
        <taxon>Bacteria</taxon>
        <taxon>Bacillati</taxon>
        <taxon>Actinomycetota</taxon>
        <taxon>Actinomycetes</taxon>
        <taxon>Micromonosporales</taxon>
        <taxon>Micromonosporaceae</taxon>
        <taxon>Salinispora</taxon>
    </lineage>
</organism>
<keyword id="KW-0560">Oxidoreductase</keyword>
<proteinExistence type="inferred from homology"/>
<sequence>MFLRRMKAELINPEQALPGRPIAMPVADRHEVLGTPLAGPFPEGTQVAVFGMGCFWGAERLFWTLPGVLTTSVGYAGGYTPNPSYEEVCSGRTGHAEVVQVRYDPTKIAYEDLLKVFWENHDPTQGMRQGNDVGTQYRSAIYTTTEEQLTAAQASRDAFAPVVARAGKGEITTEIGPLGDYYFAEDYHQQYLAPTKNPGGYCNHGPNGLSCPVGVARTTG</sequence>
<evidence type="ECO:0000255" key="1">
    <source>
        <dbReference type="HAMAP-Rule" id="MF_01401"/>
    </source>
</evidence>
<accession>A8M3K6</accession>